<keyword id="KW-0067">ATP-binding</keyword>
<keyword id="KW-0963">Cytoplasm</keyword>
<keyword id="KW-0324">Glycolysis</keyword>
<keyword id="KW-0418">Kinase</keyword>
<keyword id="KW-0547">Nucleotide-binding</keyword>
<keyword id="KW-0808">Transferase</keyword>
<reference key="1">
    <citation type="journal article" date="2007" name="PLoS ONE">
        <title>Genome sequencing shows that European isolates of Francisella tularensis subspecies tularensis are almost identical to US laboratory strain Schu S4.</title>
        <authorList>
            <person name="Chaudhuri R.R."/>
            <person name="Ren C.-P."/>
            <person name="Desmond L."/>
            <person name="Vincent G.A."/>
            <person name="Silman N.J."/>
            <person name="Brehm J.K."/>
            <person name="Elmore M.J."/>
            <person name="Hudson M.J."/>
            <person name="Forsman M."/>
            <person name="Isherwood K.E."/>
            <person name="Gurycova D."/>
            <person name="Minton N.P."/>
            <person name="Titball R.W."/>
            <person name="Pallen M.J."/>
            <person name="Vipond R."/>
        </authorList>
    </citation>
    <scope>NUCLEOTIDE SEQUENCE [LARGE SCALE GENOMIC DNA]</scope>
    <source>
        <strain>FSC 198</strain>
    </source>
</reference>
<comment type="catalytic activity">
    <reaction evidence="1">
        <text>(2R)-3-phosphoglycerate + ATP = (2R)-3-phospho-glyceroyl phosphate + ADP</text>
        <dbReference type="Rhea" id="RHEA:14801"/>
        <dbReference type="ChEBI" id="CHEBI:30616"/>
        <dbReference type="ChEBI" id="CHEBI:57604"/>
        <dbReference type="ChEBI" id="CHEBI:58272"/>
        <dbReference type="ChEBI" id="CHEBI:456216"/>
        <dbReference type="EC" id="2.7.2.3"/>
    </reaction>
</comment>
<comment type="pathway">
    <text evidence="1">Carbohydrate degradation; glycolysis; pyruvate from D-glyceraldehyde 3-phosphate: step 2/5.</text>
</comment>
<comment type="subunit">
    <text evidence="1">Monomer.</text>
</comment>
<comment type="subcellular location">
    <subcellularLocation>
        <location evidence="1">Cytoplasm</location>
    </subcellularLocation>
</comment>
<comment type="similarity">
    <text evidence="1">Belongs to the phosphoglycerate kinase family.</text>
</comment>
<accession>Q14GM9</accession>
<dbReference type="EC" id="2.7.2.3" evidence="1"/>
<dbReference type="EMBL" id="AM286280">
    <property type="protein sequence ID" value="CAL09383.1"/>
    <property type="molecule type" value="Genomic_DNA"/>
</dbReference>
<dbReference type="RefSeq" id="WP_003022166.1">
    <property type="nucleotide sequence ID" value="NC_008245.1"/>
</dbReference>
<dbReference type="SMR" id="Q14GM9"/>
<dbReference type="KEGG" id="ftf:FTF1367c"/>
<dbReference type="HOGENOM" id="CLU_025427_0_2_6"/>
<dbReference type="UniPathway" id="UPA00109">
    <property type="reaction ID" value="UER00185"/>
</dbReference>
<dbReference type="GO" id="GO:0005829">
    <property type="term" value="C:cytosol"/>
    <property type="evidence" value="ECO:0007669"/>
    <property type="project" value="TreeGrafter"/>
</dbReference>
<dbReference type="GO" id="GO:0043531">
    <property type="term" value="F:ADP binding"/>
    <property type="evidence" value="ECO:0007669"/>
    <property type="project" value="TreeGrafter"/>
</dbReference>
<dbReference type="GO" id="GO:0005524">
    <property type="term" value="F:ATP binding"/>
    <property type="evidence" value="ECO:0007669"/>
    <property type="project" value="UniProtKB-KW"/>
</dbReference>
<dbReference type="GO" id="GO:0004618">
    <property type="term" value="F:phosphoglycerate kinase activity"/>
    <property type="evidence" value="ECO:0007669"/>
    <property type="project" value="UniProtKB-UniRule"/>
</dbReference>
<dbReference type="GO" id="GO:0006094">
    <property type="term" value="P:gluconeogenesis"/>
    <property type="evidence" value="ECO:0007669"/>
    <property type="project" value="TreeGrafter"/>
</dbReference>
<dbReference type="GO" id="GO:0006096">
    <property type="term" value="P:glycolytic process"/>
    <property type="evidence" value="ECO:0007669"/>
    <property type="project" value="UniProtKB-UniRule"/>
</dbReference>
<dbReference type="FunFam" id="3.40.50.1260:FF:000001">
    <property type="entry name" value="Phosphoglycerate kinase"/>
    <property type="match status" value="1"/>
</dbReference>
<dbReference type="FunFam" id="3.40.50.1260:FF:000005">
    <property type="entry name" value="Phosphoglycerate kinase"/>
    <property type="match status" value="1"/>
</dbReference>
<dbReference type="Gene3D" id="3.40.50.1260">
    <property type="entry name" value="Phosphoglycerate kinase, N-terminal domain"/>
    <property type="match status" value="2"/>
</dbReference>
<dbReference type="HAMAP" id="MF_00145">
    <property type="entry name" value="Phosphoglyc_kinase"/>
    <property type="match status" value="1"/>
</dbReference>
<dbReference type="InterPro" id="IPR001576">
    <property type="entry name" value="Phosphoglycerate_kinase"/>
</dbReference>
<dbReference type="InterPro" id="IPR015911">
    <property type="entry name" value="Phosphoglycerate_kinase_CS"/>
</dbReference>
<dbReference type="InterPro" id="IPR015824">
    <property type="entry name" value="Phosphoglycerate_kinase_N"/>
</dbReference>
<dbReference type="InterPro" id="IPR036043">
    <property type="entry name" value="Phosphoglycerate_kinase_sf"/>
</dbReference>
<dbReference type="PANTHER" id="PTHR11406">
    <property type="entry name" value="PHOSPHOGLYCERATE KINASE"/>
    <property type="match status" value="1"/>
</dbReference>
<dbReference type="PANTHER" id="PTHR11406:SF23">
    <property type="entry name" value="PHOSPHOGLYCERATE KINASE 1, CHLOROPLASTIC-RELATED"/>
    <property type="match status" value="1"/>
</dbReference>
<dbReference type="Pfam" id="PF00162">
    <property type="entry name" value="PGK"/>
    <property type="match status" value="1"/>
</dbReference>
<dbReference type="PIRSF" id="PIRSF000724">
    <property type="entry name" value="Pgk"/>
    <property type="match status" value="1"/>
</dbReference>
<dbReference type="PRINTS" id="PR00477">
    <property type="entry name" value="PHGLYCKINASE"/>
</dbReference>
<dbReference type="SUPFAM" id="SSF53748">
    <property type="entry name" value="Phosphoglycerate kinase"/>
    <property type="match status" value="1"/>
</dbReference>
<dbReference type="PROSITE" id="PS00111">
    <property type="entry name" value="PGLYCERATE_KINASE"/>
    <property type="match status" value="1"/>
</dbReference>
<proteinExistence type="inferred from homology"/>
<evidence type="ECO:0000255" key="1">
    <source>
        <dbReference type="HAMAP-Rule" id="MF_00145"/>
    </source>
</evidence>
<feature type="chain" id="PRO_1000057989" description="Phosphoglycerate kinase">
    <location>
        <begin position="1"/>
        <end position="392"/>
    </location>
</feature>
<feature type="binding site" evidence="1">
    <location>
        <begin position="21"/>
        <end position="23"/>
    </location>
    <ligand>
        <name>substrate</name>
    </ligand>
</feature>
<feature type="binding site" evidence="1">
    <location>
        <position position="36"/>
    </location>
    <ligand>
        <name>substrate</name>
    </ligand>
</feature>
<feature type="binding site" evidence="1">
    <location>
        <begin position="59"/>
        <end position="62"/>
    </location>
    <ligand>
        <name>substrate</name>
    </ligand>
</feature>
<feature type="binding site" evidence="1">
    <location>
        <position position="113"/>
    </location>
    <ligand>
        <name>substrate</name>
    </ligand>
</feature>
<feature type="binding site" evidence="1">
    <location>
        <position position="146"/>
    </location>
    <ligand>
        <name>substrate</name>
    </ligand>
</feature>
<feature type="binding site" evidence="1">
    <location>
        <position position="197"/>
    </location>
    <ligand>
        <name>ATP</name>
        <dbReference type="ChEBI" id="CHEBI:30616"/>
    </ligand>
</feature>
<feature type="binding site" evidence="1">
    <location>
        <position position="319"/>
    </location>
    <ligand>
        <name>ATP</name>
        <dbReference type="ChEBI" id="CHEBI:30616"/>
    </ligand>
</feature>
<feature type="binding site" evidence="1">
    <location>
        <begin position="345"/>
        <end position="348"/>
    </location>
    <ligand>
        <name>ATP</name>
        <dbReference type="ChEBI" id="CHEBI:30616"/>
    </ligand>
</feature>
<name>PGK_FRAT1</name>
<gene>
    <name evidence="1" type="primary">pgk</name>
    <name type="ordered locus">FTF1367c</name>
</gene>
<organism>
    <name type="scientific">Francisella tularensis subsp. tularensis (strain FSC 198)</name>
    <dbReference type="NCBI Taxonomy" id="393115"/>
    <lineage>
        <taxon>Bacteria</taxon>
        <taxon>Pseudomonadati</taxon>
        <taxon>Pseudomonadota</taxon>
        <taxon>Gammaproteobacteria</taxon>
        <taxon>Thiotrichales</taxon>
        <taxon>Francisellaceae</taxon>
        <taxon>Francisella</taxon>
    </lineage>
</organism>
<sequence length="392" mass="41937">MSFLTLKDVDLKDKKVLVRVDFNVPVKDGKVTSKVRIEAAIPTIQYILDQGGAVILMSHLGRPTEGEYDSQFSLEPVAKALSEIINKPVKFAKDWLDGVDVKAGEIVMCENVRFNSGEKKSTDDLSKKIASLGDVFVMDAFATAHRAQASTYGVAKYIPVACAGILLTNEIQALEKALKSPKKPMAAIVGGSKVSTKLSVLNNLLDKVEILIVGGGIANTFIKAEGFDVGNSLYEQDLVAEATEILAKAKALGVNIPVPVDVRVAKEFSENAQAIIKKVSDVVADEMILDIGPESQKIIAELLKSANTILWNGPVGVFEFDNFAEGTKALSLAIAQSHAFSVAGGGDTIAAIEKFGIKDQVSYISTAGGAFLEFLEGKKLPAIEILKEKAIR</sequence>
<protein>
    <recommendedName>
        <fullName evidence="1">Phosphoglycerate kinase</fullName>
        <ecNumber evidence="1">2.7.2.3</ecNumber>
    </recommendedName>
</protein>